<keyword id="KW-1003">Cell membrane</keyword>
<keyword id="KW-1015">Disulfide bond</keyword>
<keyword id="KW-0297">G-protein coupled receptor</keyword>
<keyword id="KW-0325">Glycoprotein</keyword>
<keyword id="KW-0472">Membrane</keyword>
<keyword id="KW-0552">Olfaction</keyword>
<keyword id="KW-0675">Receptor</keyword>
<keyword id="KW-1185">Reference proteome</keyword>
<keyword id="KW-0716">Sensory transduction</keyword>
<keyword id="KW-0807">Transducer</keyword>
<keyword id="KW-0812">Transmembrane</keyword>
<keyword id="KW-1133">Transmembrane helix</keyword>
<feature type="chain" id="PRO_0000150884" description="Olfactory receptor-like protein COR5">
    <location>
        <begin position="1"/>
        <end position="312"/>
    </location>
</feature>
<feature type="topological domain" description="Extracellular" evidence="1">
    <location>
        <begin position="1"/>
        <end position="26"/>
    </location>
</feature>
<feature type="transmembrane region" description="Helical; Name=1" evidence="1">
    <location>
        <begin position="27"/>
        <end position="49"/>
    </location>
</feature>
<feature type="topological domain" description="Cytoplasmic" evidence="1">
    <location>
        <begin position="50"/>
        <end position="57"/>
    </location>
</feature>
<feature type="transmembrane region" description="Helical; Name=2" evidence="1">
    <location>
        <begin position="58"/>
        <end position="79"/>
    </location>
</feature>
<feature type="topological domain" description="Extracellular" evidence="1">
    <location>
        <begin position="80"/>
        <end position="100"/>
    </location>
</feature>
<feature type="transmembrane region" description="Helical; Name=3" evidence="1">
    <location>
        <begin position="101"/>
        <end position="120"/>
    </location>
</feature>
<feature type="topological domain" description="Cytoplasmic" evidence="1">
    <location>
        <begin position="121"/>
        <end position="139"/>
    </location>
</feature>
<feature type="transmembrane region" description="Helical; Name=4" evidence="1">
    <location>
        <begin position="140"/>
        <end position="164"/>
    </location>
</feature>
<feature type="topological domain" description="Extracellular" evidence="1">
    <location>
        <begin position="165"/>
        <end position="205"/>
    </location>
</feature>
<feature type="transmembrane region" description="Helical; Name=5" evidence="1">
    <location>
        <begin position="206"/>
        <end position="226"/>
    </location>
</feature>
<feature type="topological domain" description="Cytoplasmic" evidence="1">
    <location>
        <begin position="227"/>
        <end position="239"/>
    </location>
</feature>
<feature type="transmembrane region" description="Helical; Name=6" evidence="1">
    <location>
        <begin position="240"/>
        <end position="260"/>
    </location>
</feature>
<feature type="topological domain" description="Extracellular" evidence="1">
    <location>
        <begin position="261"/>
        <end position="271"/>
    </location>
</feature>
<feature type="transmembrane region" description="Helical; Name=7" evidence="1">
    <location>
        <begin position="272"/>
        <end position="292"/>
    </location>
</feature>
<feature type="topological domain" description="Cytoplasmic" evidence="1">
    <location>
        <begin position="293"/>
        <end position="312"/>
    </location>
</feature>
<feature type="glycosylation site" description="N-linked (GlcNAc...) asparagine" evidence="1">
    <location>
        <position position="5"/>
    </location>
</feature>
<feature type="disulfide bond" evidence="2">
    <location>
        <begin position="97"/>
        <end position="179"/>
    </location>
</feature>
<evidence type="ECO:0000255" key="1"/>
<evidence type="ECO:0000255" key="2">
    <source>
        <dbReference type="PROSITE-ProRule" id="PRU00521"/>
    </source>
</evidence>
<evidence type="ECO:0000305" key="3"/>
<proteinExistence type="inferred from homology"/>
<accession>P37071</accession>
<protein>
    <recommendedName>
        <fullName>Olfactory receptor-like protein COR5</fullName>
    </recommendedName>
</protein>
<gene>
    <name type="primary">COR5</name>
</gene>
<sequence>MALGNCTTPTTFILSGLTDNPRLQMPLFMVFLAIYTITLLANLGLIALISVDFHLQTPMYIFLQNLSFTDAAYSTVITPKMLATFLEERRTISYVGCILQYFSFVLLTSSECLLLAVMAYDRYVAICKPLLYPAIMTKAVCWRLVEGLYSLAFLNSLVHTSGLLKLSFCSSNVVNHFFCDNSPLFQISSSSTTLNELLVFIFGSWFAMSSIITTPISYVFIILTVVRIRSKDGKYKAFSTCTSHLMAVSLFHGTVIFMYLRPVKLFSLDTDKIASLFYTVVIPMLNPLIYSWRNKEVKDALRRVIATNVWIH</sequence>
<reference key="1">
    <citation type="journal article" date="1996" name="Mech. Dev.">
        <title>Olfaction in birds: differential embryonic expression of nine putative odorant receptor genes in the avian olfactory system.</title>
        <authorList>
            <person name="Nef S."/>
            <person name="Allaman I."/>
            <person name="Fiumelli H."/>
            <person name="de Castro E."/>
            <person name="Nef P."/>
        </authorList>
    </citation>
    <scope>NUCLEOTIDE SEQUENCE [GENOMIC DNA]</scope>
    <source>
        <tissue>Olfactory epithelium</tissue>
    </source>
</reference>
<comment type="function">
    <text evidence="3">Odorant receptor.</text>
</comment>
<comment type="subcellular location">
    <subcellularLocation>
        <location>Cell membrane</location>
        <topology>Multi-pass membrane protein</topology>
    </subcellularLocation>
</comment>
<comment type="similarity">
    <text evidence="2">Belongs to the G-protein coupled receptor 1 family.</text>
</comment>
<organism>
    <name type="scientific">Gallus gallus</name>
    <name type="common">Chicken</name>
    <dbReference type="NCBI Taxonomy" id="9031"/>
    <lineage>
        <taxon>Eukaryota</taxon>
        <taxon>Metazoa</taxon>
        <taxon>Chordata</taxon>
        <taxon>Craniata</taxon>
        <taxon>Vertebrata</taxon>
        <taxon>Euteleostomi</taxon>
        <taxon>Archelosauria</taxon>
        <taxon>Archosauria</taxon>
        <taxon>Dinosauria</taxon>
        <taxon>Saurischia</taxon>
        <taxon>Theropoda</taxon>
        <taxon>Coelurosauria</taxon>
        <taxon>Aves</taxon>
        <taxon>Neognathae</taxon>
        <taxon>Galloanserae</taxon>
        <taxon>Galliformes</taxon>
        <taxon>Phasianidae</taxon>
        <taxon>Phasianinae</taxon>
        <taxon>Gallus</taxon>
    </lineage>
</organism>
<name>OLF5_CHICK</name>
<dbReference type="EMBL" id="Z79589">
    <property type="protein sequence ID" value="CAB01850.1"/>
    <property type="molecule type" value="Genomic_DNA"/>
</dbReference>
<dbReference type="SMR" id="P37071"/>
<dbReference type="FunCoup" id="P37071">
    <property type="interactions" value="7"/>
</dbReference>
<dbReference type="GlyCosmos" id="P37071">
    <property type="glycosylation" value="1 site, No reported glycans"/>
</dbReference>
<dbReference type="GlyGen" id="P37071">
    <property type="glycosylation" value="1 site"/>
</dbReference>
<dbReference type="VEuPathDB" id="HostDB:geneid_423002"/>
<dbReference type="InParanoid" id="P37071"/>
<dbReference type="Proteomes" id="UP000000539">
    <property type="component" value="Unassembled WGS sequence"/>
</dbReference>
<dbReference type="GO" id="GO:0005886">
    <property type="term" value="C:plasma membrane"/>
    <property type="evidence" value="ECO:0007669"/>
    <property type="project" value="UniProtKB-SubCell"/>
</dbReference>
<dbReference type="GO" id="GO:0004930">
    <property type="term" value="F:G protein-coupled receptor activity"/>
    <property type="evidence" value="ECO:0007669"/>
    <property type="project" value="UniProtKB-KW"/>
</dbReference>
<dbReference type="GO" id="GO:0005549">
    <property type="term" value="F:odorant binding"/>
    <property type="evidence" value="ECO:0000318"/>
    <property type="project" value="GO_Central"/>
</dbReference>
<dbReference type="GO" id="GO:0004984">
    <property type="term" value="F:olfactory receptor activity"/>
    <property type="evidence" value="ECO:0000318"/>
    <property type="project" value="GO_Central"/>
</dbReference>
<dbReference type="CDD" id="cd15410">
    <property type="entry name" value="7tmA_OR5D-like"/>
    <property type="match status" value="1"/>
</dbReference>
<dbReference type="FunFam" id="1.10.1220.70:FF:000001">
    <property type="entry name" value="Olfactory receptor"/>
    <property type="match status" value="1"/>
</dbReference>
<dbReference type="FunFam" id="1.20.1070.10:FF:000003">
    <property type="entry name" value="Olfactory receptor"/>
    <property type="match status" value="1"/>
</dbReference>
<dbReference type="Gene3D" id="1.20.1070.10">
    <property type="entry name" value="Rhodopsin 7-helix transmembrane proteins"/>
    <property type="match status" value="1"/>
</dbReference>
<dbReference type="InterPro" id="IPR000276">
    <property type="entry name" value="GPCR_Rhodpsn"/>
</dbReference>
<dbReference type="InterPro" id="IPR017452">
    <property type="entry name" value="GPCR_Rhodpsn_7TM"/>
</dbReference>
<dbReference type="InterPro" id="IPR000725">
    <property type="entry name" value="Olfact_rcpt"/>
</dbReference>
<dbReference type="PANTHER" id="PTHR48018">
    <property type="entry name" value="OLFACTORY RECEPTOR"/>
    <property type="match status" value="1"/>
</dbReference>
<dbReference type="Pfam" id="PF13853">
    <property type="entry name" value="7tm_4"/>
    <property type="match status" value="1"/>
</dbReference>
<dbReference type="PRINTS" id="PR00237">
    <property type="entry name" value="GPCRRHODOPSN"/>
</dbReference>
<dbReference type="PRINTS" id="PR00245">
    <property type="entry name" value="OLFACTORYR"/>
</dbReference>
<dbReference type="SUPFAM" id="SSF81321">
    <property type="entry name" value="Family A G protein-coupled receptor-like"/>
    <property type="match status" value="1"/>
</dbReference>
<dbReference type="PROSITE" id="PS00237">
    <property type="entry name" value="G_PROTEIN_RECEP_F1_1"/>
    <property type="match status" value="1"/>
</dbReference>
<dbReference type="PROSITE" id="PS50262">
    <property type="entry name" value="G_PROTEIN_RECEP_F1_2"/>
    <property type="match status" value="1"/>
</dbReference>